<organism>
    <name type="scientific">Bombina maxima</name>
    <name type="common">Giant fire-bellied toad</name>
    <name type="synonym">Chinese red belly toad</name>
    <dbReference type="NCBI Taxonomy" id="161274"/>
    <lineage>
        <taxon>Eukaryota</taxon>
        <taxon>Metazoa</taxon>
        <taxon>Chordata</taxon>
        <taxon>Craniata</taxon>
        <taxon>Vertebrata</taxon>
        <taxon>Euteleostomi</taxon>
        <taxon>Amphibia</taxon>
        <taxon>Batrachia</taxon>
        <taxon>Anura</taxon>
        <taxon>Bombinatoridae</taxon>
        <taxon>Bombina</taxon>
    </lineage>
</organism>
<accession>Q58T41</accession>
<accession>P83085</accession>
<keyword id="KW-0027">Amidation</keyword>
<keyword id="KW-0878">Amphibian defense peptide</keyword>
<keyword id="KW-0044">Antibiotic</keyword>
<keyword id="KW-0929">Antimicrobial</keyword>
<keyword id="KW-0165">Cleavage on pair of basic residues</keyword>
<keyword id="KW-0204">Cytolysis</keyword>
<keyword id="KW-0903">Direct protein sequencing</keyword>
<keyword id="KW-0295">Fungicide</keyword>
<keyword id="KW-0354">Hemolysis</keyword>
<keyword id="KW-0964">Secreted</keyword>
<keyword id="KW-0732">Signal</keyword>
<name>M11H1_BOMMX</name>
<dbReference type="EMBL" id="AY849019">
    <property type="protein sequence ID" value="AAX50240.1"/>
    <property type="molecule type" value="mRNA"/>
</dbReference>
<dbReference type="SMR" id="Q58T41"/>
<dbReference type="GO" id="GO:0005576">
    <property type="term" value="C:extracellular region"/>
    <property type="evidence" value="ECO:0007669"/>
    <property type="project" value="UniProtKB-SubCell"/>
</dbReference>
<dbReference type="GO" id="GO:0042742">
    <property type="term" value="P:defense response to bacterium"/>
    <property type="evidence" value="ECO:0007669"/>
    <property type="project" value="UniProtKB-KW"/>
</dbReference>
<dbReference type="GO" id="GO:0050832">
    <property type="term" value="P:defense response to fungus"/>
    <property type="evidence" value="ECO:0007669"/>
    <property type="project" value="UniProtKB-KW"/>
</dbReference>
<dbReference type="GO" id="GO:0031640">
    <property type="term" value="P:killing of cells of another organism"/>
    <property type="evidence" value="ECO:0007669"/>
    <property type="project" value="UniProtKB-KW"/>
</dbReference>
<dbReference type="InterPro" id="IPR007962">
    <property type="entry name" value="Bombinin"/>
</dbReference>
<dbReference type="Pfam" id="PF05298">
    <property type="entry name" value="Bombinin"/>
    <property type="match status" value="1"/>
</dbReference>
<evidence type="ECO:0000250" key="1"/>
<evidence type="ECO:0000255" key="2"/>
<evidence type="ECO:0000269" key="3">
    <source>
    </source>
</evidence>
<evidence type="ECO:0000269" key="4">
    <source>
    </source>
</evidence>
<evidence type="ECO:0000269" key="5">
    <source ref="2"/>
</evidence>
<evidence type="ECO:0000305" key="6"/>
<feature type="signal peptide" evidence="2">
    <location>
        <begin position="1"/>
        <end position="18"/>
    </location>
</feature>
<feature type="propeptide" id="PRO_0000003228">
    <location>
        <begin position="19"/>
        <end position="43"/>
    </location>
</feature>
<feature type="peptide" id="PRO_0000003229" description="Maximin-11">
    <location>
        <begin position="44"/>
        <end position="70"/>
    </location>
</feature>
<feature type="propeptide" id="PRO_0000003230" evidence="1">
    <location>
        <begin position="74"/>
        <end position="123"/>
    </location>
</feature>
<feature type="peptide" id="PRO_0000003231" description="Maximin-H1">
    <location>
        <begin position="124"/>
        <end position="143"/>
    </location>
</feature>
<feature type="modified residue" description="Asparagine amide" evidence="4">
    <location>
        <position position="70"/>
    </location>
</feature>
<feature type="modified residue" description="Leucine amide" evidence="3 4">
    <location>
        <position position="143"/>
    </location>
</feature>
<comment type="function">
    <text evidence="1">Maximin-11 shows antimicrobial activity against bacteria and against the fungus C.albicans. It has little hemolytic activity (By similarity).</text>
</comment>
<comment type="function">
    <text evidence="3 5">Maximin-H1 shows antibacterial activity against both Gram-positive and Gram-negative bacteria. It also shows antimicrobial activity against the fungus C.albicans. Shows strong hemolytic activity.</text>
</comment>
<comment type="subcellular location">
    <subcellularLocation>
        <location evidence="5">Secreted</location>
    </subcellularLocation>
</comment>
<comment type="tissue specificity">
    <text evidence="5">Expressed by the skin glands.</text>
</comment>
<comment type="mass spectrometry">
    <molecule>Maximin-H1</molecule>
</comment>
<comment type="similarity">
    <text evidence="6">Belongs to the bombinin family.</text>
</comment>
<proteinExistence type="evidence at protein level"/>
<sequence>MNFKYIVAVSFLIASAYARSEENDEQSLSQRDVLEEESLREIRGIGTKIIGGLKTAVKGALKELASTYVNGKRTAEDHEVMKRLEAVMRDLDSLDYPEEASERETRGFNQEEIANLFTKKEKRILGPVISTIGGVLGGLLKNLG</sequence>
<reference key="1">
    <citation type="journal article" date="2005" name="Eur. J. Immunol.">
        <title>Variety of antimicrobial peptides in the Bombina maxima toad and evidence of their rapid diversification.</title>
        <authorList>
            <person name="Lee W.-H."/>
            <person name="Li Y."/>
            <person name="Lai R."/>
            <person name="Li S."/>
            <person name="Zhang Y."/>
            <person name="Wang W."/>
        </authorList>
    </citation>
    <scope>NUCLEOTIDE SEQUENCE [MRNA]</scope>
    <scope>PROTEIN SEQUENCE OF 44-70 AND 124-143</scope>
    <scope>AMIDATION AT ASN-70 AND LEU-143</scope>
    <scope>MASS SPECTROMETRY</scope>
    <source>
        <tissue>Skin</tissue>
    </source>
</reference>
<reference key="2">
    <citation type="submission" date="2001-07" db="UniProtKB">
        <title>Isolation and structural characterisation of antimicrobial peptides from the venom of the Chinese large-webbed bell toad (Bombina maxima).</title>
        <authorList>
            <person name="Chen T.B."/>
            <person name="McClean S."/>
            <person name="Orr D.F."/>
            <person name="Bjourson A.J."/>
            <person name="Rao P.F."/>
            <person name="Shaw C."/>
        </authorList>
    </citation>
    <scope>PROTEIN SEQUENCE OF 124-143</scope>
    <scope>FUNCTION OF MAXIMIN-H1</scope>
    <scope>SUBCELLULAR LOCATION</scope>
    <scope>TISSUE SPECIFICITY</scope>
    <source>
        <tissue>Skin secretion</tissue>
    </source>
</reference>
<reference key="3">
    <citation type="journal article" date="2002" name="Peptides">
        <title>Antimicrobial peptides from skin secretions of Chinese red belly toad Bombina maxima.</title>
        <authorList>
            <person name="Lai R."/>
            <person name="Zheng Y.-T."/>
            <person name="Shen J.-H."/>
            <person name="Liu G.-J."/>
            <person name="Liu H."/>
            <person name="Lee W.-H."/>
            <person name="Tang S.-Z."/>
            <person name="Zhang Y."/>
        </authorList>
    </citation>
    <scope>PROTEIN SEQUENCE OF 124-143</scope>
    <scope>AMIDATION AT LEU-143</scope>
    <scope>FUNCTION OF MAXIMIN-H1</scope>
    <scope>MASS SPECTROMETRY</scope>
</reference>
<protein>
    <recommendedName>
        <fullName>Maximins 11/H1</fullName>
    </recommendedName>
    <component>
        <recommendedName>
            <fullName>Maximin-11</fullName>
        </recommendedName>
    </component>
    <component>
        <recommendedName>
            <fullName>Maximin-H1</fullName>
        </recommendedName>
        <alternativeName>
            <fullName>Maximin-6</fullName>
        </alternativeName>
    </component>
</protein>